<comment type="function">
    <text evidence="1">IGPS catalyzes the conversion of PRFAR and glutamine to IGP, AICAR and glutamate. The HisF subunit catalyzes the cyclization activity that produces IGP and AICAR from PRFAR using the ammonia provided by the HisH subunit.</text>
</comment>
<comment type="catalytic activity">
    <reaction evidence="1">
        <text>5-[(5-phospho-1-deoxy-D-ribulos-1-ylimino)methylamino]-1-(5-phospho-beta-D-ribosyl)imidazole-4-carboxamide + L-glutamine = D-erythro-1-(imidazol-4-yl)glycerol 3-phosphate + 5-amino-1-(5-phospho-beta-D-ribosyl)imidazole-4-carboxamide + L-glutamate + H(+)</text>
        <dbReference type="Rhea" id="RHEA:24793"/>
        <dbReference type="ChEBI" id="CHEBI:15378"/>
        <dbReference type="ChEBI" id="CHEBI:29985"/>
        <dbReference type="ChEBI" id="CHEBI:58278"/>
        <dbReference type="ChEBI" id="CHEBI:58359"/>
        <dbReference type="ChEBI" id="CHEBI:58475"/>
        <dbReference type="ChEBI" id="CHEBI:58525"/>
        <dbReference type="EC" id="4.3.2.10"/>
    </reaction>
</comment>
<comment type="pathway">
    <text evidence="1">Amino-acid biosynthesis; L-histidine biosynthesis; L-histidine from 5-phospho-alpha-D-ribose 1-diphosphate: step 5/9.</text>
</comment>
<comment type="subunit">
    <text evidence="1">Heterodimer of HisH and HisF.</text>
</comment>
<comment type="subcellular location">
    <subcellularLocation>
        <location evidence="1">Cytoplasm</location>
    </subcellularLocation>
</comment>
<comment type="similarity">
    <text evidence="1">Belongs to the HisA/HisF family.</text>
</comment>
<proteinExistence type="inferred from homology"/>
<feature type="chain" id="PRO_1000135011" description="Imidazole glycerol phosphate synthase subunit HisF">
    <location>
        <begin position="1"/>
        <end position="254"/>
    </location>
</feature>
<feature type="active site" evidence="1">
    <location>
        <position position="12"/>
    </location>
</feature>
<feature type="active site" evidence="1">
    <location>
        <position position="131"/>
    </location>
</feature>
<reference key="1">
    <citation type="journal article" date="2008" name="J. Bacteriol.">
        <title>Complete genome sequence of the soil actinomycete Kocuria rhizophila.</title>
        <authorList>
            <person name="Takarada H."/>
            <person name="Sekine M."/>
            <person name="Kosugi H."/>
            <person name="Matsuo Y."/>
            <person name="Fujisawa T."/>
            <person name="Omata S."/>
            <person name="Kishi E."/>
            <person name="Shimizu A."/>
            <person name="Tsukatani N."/>
            <person name="Tanikawa S."/>
            <person name="Fujita N."/>
            <person name="Harayama S."/>
        </authorList>
    </citation>
    <scope>NUCLEOTIDE SEQUENCE [LARGE SCALE GENOMIC DNA]</scope>
    <source>
        <strain>ATCC 9341 / DSM 348 / NBRC 103217 / DC2201</strain>
    </source>
</reference>
<dbReference type="EC" id="4.3.2.10" evidence="1"/>
<dbReference type="EMBL" id="AP009152">
    <property type="protein sequence ID" value="BAG29522.1"/>
    <property type="molecule type" value="Genomic_DNA"/>
</dbReference>
<dbReference type="RefSeq" id="WP_012398243.1">
    <property type="nucleotide sequence ID" value="NC_010617.1"/>
</dbReference>
<dbReference type="SMR" id="B2GGU9"/>
<dbReference type="STRING" id="378753.KRH_11750"/>
<dbReference type="KEGG" id="krh:KRH_11750"/>
<dbReference type="eggNOG" id="COG0107">
    <property type="taxonomic scope" value="Bacteria"/>
</dbReference>
<dbReference type="HOGENOM" id="CLU_048577_4_0_11"/>
<dbReference type="OrthoDB" id="9781903at2"/>
<dbReference type="UniPathway" id="UPA00031">
    <property type="reaction ID" value="UER00010"/>
</dbReference>
<dbReference type="Proteomes" id="UP000008838">
    <property type="component" value="Chromosome"/>
</dbReference>
<dbReference type="GO" id="GO:0005737">
    <property type="term" value="C:cytoplasm"/>
    <property type="evidence" value="ECO:0007669"/>
    <property type="project" value="UniProtKB-SubCell"/>
</dbReference>
<dbReference type="GO" id="GO:0000107">
    <property type="term" value="F:imidazoleglycerol-phosphate synthase activity"/>
    <property type="evidence" value="ECO:0007669"/>
    <property type="project" value="UniProtKB-UniRule"/>
</dbReference>
<dbReference type="GO" id="GO:0016829">
    <property type="term" value="F:lyase activity"/>
    <property type="evidence" value="ECO:0007669"/>
    <property type="project" value="UniProtKB-KW"/>
</dbReference>
<dbReference type="GO" id="GO:0000105">
    <property type="term" value="P:L-histidine biosynthetic process"/>
    <property type="evidence" value="ECO:0007669"/>
    <property type="project" value="UniProtKB-UniRule"/>
</dbReference>
<dbReference type="CDD" id="cd04731">
    <property type="entry name" value="HisF"/>
    <property type="match status" value="1"/>
</dbReference>
<dbReference type="FunFam" id="3.20.20.70:FF:000006">
    <property type="entry name" value="Imidazole glycerol phosphate synthase subunit HisF"/>
    <property type="match status" value="1"/>
</dbReference>
<dbReference type="Gene3D" id="3.20.20.70">
    <property type="entry name" value="Aldolase class I"/>
    <property type="match status" value="1"/>
</dbReference>
<dbReference type="HAMAP" id="MF_01013">
    <property type="entry name" value="HisF"/>
    <property type="match status" value="1"/>
</dbReference>
<dbReference type="InterPro" id="IPR013785">
    <property type="entry name" value="Aldolase_TIM"/>
</dbReference>
<dbReference type="InterPro" id="IPR006062">
    <property type="entry name" value="His_biosynth"/>
</dbReference>
<dbReference type="InterPro" id="IPR004651">
    <property type="entry name" value="HisF"/>
</dbReference>
<dbReference type="InterPro" id="IPR050064">
    <property type="entry name" value="IGPS_HisA/HisF"/>
</dbReference>
<dbReference type="InterPro" id="IPR011060">
    <property type="entry name" value="RibuloseP-bd_barrel"/>
</dbReference>
<dbReference type="NCBIfam" id="TIGR00735">
    <property type="entry name" value="hisF"/>
    <property type="match status" value="1"/>
</dbReference>
<dbReference type="PANTHER" id="PTHR21235:SF2">
    <property type="entry name" value="IMIDAZOLE GLYCEROL PHOSPHATE SYNTHASE HISHF"/>
    <property type="match status" value="1"/>
</dbReference>
<dbReference type="PANTHER" id="PTHR21235">
    <property type="entry name" value="IMIDAZOLE GLYCEROL PHOSPHATE SYNTHASE SUBUNIT HISF/H IGP SYNTHASE SUBUNIT HISF/H"/>
    <property type="match status" value="1"/>
</dbReference>
<dbReference type="Pfam" id="PF00977">
    <property type="entry name" value="His_biosynth"/>
    <property type="match status" value="1"/>
</dbReference>
<dbReference type="SUPFAM" id="SSF51366">
    <property type="entry name" value="Ribulose-phoshate binding barrel"/>
    <property type="match status" value="1"/>
</dbReference>
<evidence type="ECO:0000255" key="1">
    <source>
        <dbReference type="HAMAP-Rule" id="MF_01013"/>
    </source>
</evidence>
<sequence>MGVAVRVIPCLDVDAGRVVKGVNFENLRDAGDPVELAARYDLAGADELTFLDVTASSGERDTMFDVVSRTAETMFVPLTVGGGVRTPQDVDRLLRCGADKASINTAAVERPEVVDEITRRFGSQVLVLSLDARRTGNTASGFEVTTRGGRTLTGLDALQWAREAEERGVGEILLNSMDADGTREGFDLEMISAVREVVGVPLIASGGAGSPEHFPPAVAAGADAVLAASVFHFGPDHAIGDVKAALRAAGHEVR</sequence>
<organism>
    <name type="scientific">Kocuria rhizophila (strain ATCC 9341 / DSM 348 / NBRC 103217 / DC2201)</name>
    <dbReference type="NCBI Taxonomy" id="378753"/>
    <lineage>
        <taxon>Bacteria</taxon>
        <taxon>Bacillati</taxon>
        <taxon>Actinomycetota</taxon>
        <taxon>Actinomycetes</taxon>
        <taxon>Micrococcales</taxon>
        <taxon>Micrococcaceae</taxon>
        <taxon>Kocuria</taxon>
    </lineage>
</organism>
<keyword id="KW-0028">Amino-acid biosynthesis</keyword>
<keyword id="KW-0963">Cytoplasm</keyword>
<keyword id="KW-0368">Histidine biosynthesis</keyword>
<keyword id="KW-0456">Lyase</keyword>
<keyword id="KW-1185">Reference proteome</keyword>
<name>HIS6_KOCRD</name>
<accession>B2GGU9</accession>
<gene>
    <name evidence="1" type="primary">hisF</name>
    <name type="ordered locus">KRH_11750</name>
</gene>
<protein>
    <recommendedName>
        <fullName evidence="1">Imidazole glycerol phosphate synthase subunit HisF</fullName>
        <ecNumber evidence="1">4.3.2.10</ecNumber>
    </recommendedName>
    <alternativeName>
        <fullName evidence="1">IGP synthase cyclase subunit</fullName>
    </alternativeName>
    <alternativeName>
        <fullName evidence="1">IGP synthase subunit HisF</fullName>
    </alternativeName>
    <alternativeName>
        <fullName evidence="1">ImGP synthase subunit HisF</fullName>
        <shortName evidence="1">IGPS subunit HisF</shortName>
    </alternativeName>
</protein>